<accession>Q9KQP1</accession>
<dbReference type="EMBL" id="AE003852">
    <property type="protein sequence ID" value="AAF95105.1"/>
    <property type="status" value="ALT_INIT"/>
    <property type="molecule type" value="Genomic_DNA"/>
</dbReference>
<dbReference type="PIR" id="H82135">
    <property type="entry name" value="H82135"/>
</dbReference>
<dbReference type="RefSeq" id="NP_231591.1">
    <property type="nucleotide sequence ID" value="NC_002505.1"/>
</dbReference>
<dbReference type="RefSeq" id="WP_000882652.1">
    <property type="nucleotide sequence ID" value="NZ_LT906614.1"/>
</dbReference>
<dbReference type="SMR" id="Q9KQP1"/>
<dbReference type="STRING" id="243277.VC_1957"/>
<dbReference type="DNASU" id="2613461"/>
<dbReference type="EnsemblBacteria" id="AAF95105">
    <property type="protein sequence ID" value="AAF95105"/>
    <property type="gene ID" value="VC_1957"/>
</dbReference>
<dbReference type="KEGG" id="vch:VC_1957"/>
<dbReference type="PATRIC" id="fig|243277.26.peg.1870"/>
<dbReference type="eggNOG" id="COG3100">
    <property type="taxonomic scope" value="Bacteria"/>
</dbReference>
<dbReference type="HOGENOM" id="CLU_155118_1_0_6"/>
<dbReference type="Proteomes" id="UP000000584">
    <property type="component" value="Chromosome 1"/>
</dbReference>
<dbReference type="Gene3D" id="3.10.510.20">
    <property type="entry name" value="YcgL domain"/>
    <property type="match status" value="1"/>
</dbReference>
<dbReference type="HAMAP" id="MF_01866">
    <property type="entry name" value="UPF0745"/>
    <property type="match status" value="1"/>
</dbReference>
<dbReference type="InterPro" id="IPR038068">
    <property type="entry name" value="YcgL-like_sf"/>
</dbReference>
<dbReference type="InterPro" id="IPR027354">
    <property type="entry name" value="YcgL_dom"/>
</dbReference>
<dbReference type="PANTHER" id="PTHR38109">
    <property type="entry name" value="PROTEIN YCGL"/>
    <property type="match status" value="1"/>
</dbReference>
<dbReference type="PANTHER" id="PTHR38109:SF1">
    <property type="entry name" value="PROTEIN YCGL"/>
    <property type="match status" value="1"/>
</dbReference>
<dbReference type="Pfam" id="PF05166">
    <property type="entry name" value="YcgL"/>
    <property type="match status" value="1"/>
</dbReference>
<dbReference type="SUPFAM" id="SSF160191">
    <property type="entry name" value="YcgL-like"/>
    <property type="match status" value="1"/>
</dbReference>
<dbReference type="PROSITE" id="PS51648">
    <property type="entry name" value="YCGL"/>
    <property type="match status" value="1"/>
</dbReference>
<gene>
    <name type="ordered locus">VC_1957</name>
</gene>
<proteinExistence type="inferred from homology"/>
<organism>
    <name type="scientific">Vibrio cholerae serotype O1 (strain ATCC 39315 / El Tor Inaba N16961)</name>
    <dbReference type="NCBI Taxonomy" id="243277"/>
    <lineage>
        <taxon>Bacteria</taxon>
        <taxon>Pseudomonadati</taxon>
        <taxon>Pseudomonadota</taxon>
        <taxon>Gammaproteobacteria</taxon>
        <taxon>Vibrionales</taxon>
        <taxon>Vibrionaceae</taxon>
        <taxon>Vibrio</taxon>
    </lineage>
</organism>
<evidence type="ECO:0000255" key="1">
    <source>
        <dbReference type="HAMAP-Rule" id="MF_01866"/>
    </source>
</evidence>
<evidence type="ECO:0000256" key="2">
    <source>
        <dbReference type="SAM" id="MobiDB-lite"/>
    </source>
</evidence>
<evidence type="ECO:0000305" key="3"/>
<comment type="sequence caution" evidence="3">
    <conflict type="erroneous initiation">
        <sequence resource="EMBL-CDS" id="AAF95105"/>
    </conflict>
</comment>
<protein>
    <recommendedName>
        <fullName evidence="1">YcgL domain-containing protein VC_1957</fullName>
    </recommendedName>
</protein>
<reference key="1">
    <citation type="journal article" date="2000" name="Nature">
        <title>DNA sequence of both chromosomes of the cholera pathogen Vibrio cholerae.</title>
        <authorList>
            <person name="Heidelberg J.F."/>
            <person name="Eisen J.A."/>
            <person name="Nelson W.C."/>
            <person name="Clayton R.A."/>
            <person name="Gwinn M.L."/>
            <person name="Dodson R.J."/>
            <person name="Haft D.H."/>
            <person name="Hickey E.K."/>
            <person name="Peterson J.D."/>
            <person name="Umayam L.A."/>
            <person name="Gill S.R."/>
            <person name="Nelson K.E."/>
            <person name="Read T.D."/>
            <person name="Tettelin H."/>
            <person name="Richardson D.L."/>
            <person name="Ermolaeva M.D."/>
            <person name="Vamathevan J.J."/>
            <person name="Bass S."/>
            <person name="Qin H."/>
            <person name="Dragoi I."/>
            <person name="Sellers P."/>
            <person name="McDonald L.A."/>
            <person name="Utterback T.R."/>
            <person name="Fleischmann R.D."/>
            <person name="Nierman W.C."/>
            <person name="White O."/>
            <person name="Salzberg S.L."/>
            <person name="Smith H.O."/>
            <person name="Colwell R.R."/>
            <person name="Mekalanos J.J."/>
            <person name="Venter J.C."/>
            <person name="Fraser C.M."/>
        </authorList>
    </citation>
    <scope>NUCLEOTIDE SEQUENCE [LARGE SCALE GENOMIC DNA]</scope>
    <source>
        <strain>ATCC 39315 / El Tor Inaba N16961</strain>
    </source>
</reference>
<name>Y1957_VIBCH</name>
<feature type="chain" id="PRO_0000375393" description="YcgL domain-containing protein VC_1957">
    <location>
        <begin position="1"/>
        <end position="92"/>
    </location>
</feature>
<feature type="domain" description="YcgL" evidence="1">
    <location>
        <begin position="1"/>
        <end position="84"/>
    </location>
</feature>
<feature type="region of interest" description="Disordered" evidence="2">
    <location>
        <begin position="69"/>
        <end position="92"/>
    </location>
</feature>
<sequence>MLCSIYKSPKKEGTYLYIPKRDDFSQVPDTLKQMFGKPIFVMLVNLEQRRLAQVNVEKVKQSMQEQGFFLQLPPPPENLLEQHKERKARQTP</sequence>
<keyword id="KW-1185">Reference proteome</keyword>